<reference evidence="4" key="1">
    <citation type="journal article" date="2007" name="Nature">
        <title>Evolution of genes and genomes on the Drosophila phylogeny.</title>
        <authorList>
            <consortium name="Drosophila 12 genomes consortium"/>
        </authorList>
    </citation>
    <scope>NUCLEOTIDE SEQUENCE [LARGE SCALE GENOMIC DNA]</scope>
    <source>
        <strain evidence="4">Tucson 14021-0224.01</strain>
    </source>
</reference>
<accession>B3NDM7</accession>
<gene>
    <name evidence="1" type="primary">flower</name>
    <name type="ORF">GG13520</name>
</gene>
<sequence length="194" mass="20613">MSFAEKITGLLARPNQQDPIGPEQPWYLKYGSRLLGIVAAFFAILFGLWNVFSILTLNVSCLVAGIIQMVAGFVVMLLEAPCCFVCFEQVNVIADKVDSKPLYFRAGLYIAMAIPPIILCFGLASLFGSGLILGTGVVYGMMALGKKASADDMRAAAQQTFGGNTPAQTNDRAGIVNNAQPFSFTGAVGTDSNV</sequence>
<organism>
    <name type="scientific">Drosophila erecta</name>
    <name type="common">Fruit fly</name>
    <dbReference type="NCBI Taxonomy" id="7220"/>
    <lineage>
        <taxon>Eukaryota</taxon>
        <taxon>Metazoa</taxon>
        <taxon>Ecdysozoa</taxon>
        <taxon>Arthropoda</taxon>
        <taxon>Hexapoda</taxon>
        <taxon>Insecta</taxon>
        <taxon>Pterygota</taxon>
        <taxon>Neoptera</taxon>
        <taxon>Endopterygota</taxon>
        <taxon>Diptera</taxon>
        <taxon>Brachycera</taxon>
        <taxon>Muscomorpha</taxon>
        <taxon>Ephydroidea</taxon>
        <taxon>Drosophilidae</taxon>
        <taxon>Drosophila</taxon>
        <taxon>Sophophora</taxon>
    </lineage>
</organism>
<keyword id="KW-0106">Calcium</keyword>
<keyword id="KW-0107">Calcium channel</keyword>
<keyword id="KW-0109">Calcium transport</keyword>
<keyword id="KW-1003">Cell membrane</keyword>
<keyword id="KW-0966">Cell projection</keyword>
<keyword id="KW-0968">Cytoplasmic vesicle</keyword>
<keyword id="KW-0254">Endocytosis</keyword>
<keyword id="KW-0967">Endosome</keyword>
<keyword id="KW-0407">Ion channel</keyword>
<keyword id="KW-0406">Ion transport</keyword>
<keyword id="KW-0472">Membrane</keyword>
<keyword id="KW-0770">Synapse</keyword>
<keyword id="KW-0812">Transmembrane</keyword>
<keyword id="KW-1133">Transmembrane helix</keyword>
<keyword id="KW-0813">Transport</keyword>
<feature type="chain" id="PRO_0000389232" description="Calcium channel flower">
    <location>
        <begin position="1"/>
        <end position="194"/>
    </location>
</feature>
<feature type="transmembrane region" description="Helical" evidence="2">
    <location>
        <begin position="34"/>
        <end position="54"/>
    </location>
</feature>
<feature type="transmembrane region" description="Helical" evidence="2">
    <location>
        <begin position="59"/>
        <end position="79"/>
    </location>
</feature>
<feature type="transmembrane region" description="Helical" evidence="2">
    <location>
        <begin position="107"/>
        <end position="127"/>
    </location>
</feature>
<feature type="site" description="Calcium ion selectivity" evidence="1">
    <location>
        <position position="79"/>
    </location>
</feature>
<dbReference type="EMBL" id="CH954178">
    <property type="protein sequence ID" value="EDV52160.1"/>
    <property type="molecule type" value="Genomic_DNA"/>
</dbReference>
<dbReference type="EnsemblMetazoa" id="FBtr0133574">
    <property type="protein sequence ID" value="FBpp0132066"/>
    <property type="gene ID" value="FBgn0105792"/>
</dbReference>
<dbReference type="EnsemblMetazoa" id="XM_001973098.3">
    <property type="protein sequence ID" value="XP_001973134.1"/>
    <property type="gene ID" value="LOC6544295"/>
</dbReference>
<dbReference type="GeneID" id="6544295"/>
<dbReference type="KEGG" id="der:6544295"/>
<dbReference type="CTD" id="39720"/>
<dbReference type="eggNOG" id="KOG4085">
    <property type="taxonomic scope" value="Eukaryota"/>
</dbReference>
<dbReference type="HOGENOM" id="CLU_108196_0_0_1"/>
<dbReference type="OMA" id="YWQKAAL"/>
<dbReference type="OrthoDB" id="9934994at2759"/>
<dbReference type="PhylomeDB" id="B3NDM7"/>
<dbReference type="Proteomes" id="UP000008711">
    <property type="component" value="Unassembled WGS sequence"/>
</dbReference>
<dbReference type="GO" id="GO:0042995">
    <property type="term" value="C:cell projection"/>
    <property type="evidence" value="ECO:0007669"/>
    <property type="project" value="UniProtKB-KW"/>
</dbReference>
<dbReference type="GO" id="GO:0005768">
    <property type="term" value="C:endosome"/>
    <property type="evidence" value="ECO:0007669"/>
    <property type="project" value="UniProtKB-SubCell"/>
</dbReference>
<dbReference type="GO" id="GO:0042734">
    <property type="term" value="C:presynaptic membrane"/>
    <property type="evidence" value="ECO:0007669"/>
    <property type="project" value="UniProtKB-SubCell"/>
</dbReference>
<dbReference type="GO" id="GO:0030672">
    <property type="term" value="C:synaptic vesicle membrane"/>
    <property type="evidence" value="ECO:0000250"/>
    <property type="project" value="UniProtKB"/>
</dbReference>
<dbReference type="GO" id="GO:0005262">
    <property type="term" value="F:calcium channel activity"/>
    <property type="evidence" value="ECO:0007669"/>
    <property type="project" value="UniProtKB-KW"/>
</dbReference>
<dbReference type="GO" id="GO:0042802">
    <property type="term" value="F:identical protein binding"/>
    <property type="evidence" value="ECO:0007669"/>
    <property type="project" value="EnsemblMetazoa"/>
</dbReference>
<dbReference type="GO" id="GO:0150008">
    <property type="term" value="P:bulk synaptic vesicle endocytosis"/>
    <property type="evidence" value="ECO:0007669"/>
    <property type="project" value="EnsemblMetazoa"/>
</dbReference>
<dbReference type="GO" id="GO:0035212">
    <property type="term" value="P:cell competition in a multicellular organism"/>
    <property type="evidence" value="ECO:0007669"/>
    <property type="project" value="EnsemblMetazoa"/>
</dbReference>
<dbReference type="GO" id="GO:0150007">
    <property type="term" value="P:clathrin-dependent synaptic vesicle endocytosis"/>
    <property type="evidence" value="ECO:0007669"/>
    <property type="project" value="EnsemblMetazoa"/>
</dbReference>
<dbReference type="GO" id="GO:0046530">
    <property type="term" value="P:photoreceptor cell differentiation"/>
    <property type="evidence" value="ECO:0000250"/>
    <property type="project" value="UniProtKB"/>
</dbReference>
<dbReference type="GO" id="GO:0043525">
    <property type="term" value="P:positive regulation of neuron apoptotic process"/>
    <property type="evidence" value="ECO:0007669"/>
    <property type="project" value="EnsemblMetazoa"/>
</dbReference>
<dbReference type="GO" id="GO:0099533">
    <property type="term" value="P:positive regulation of presynaptic cytosolic calcium concentration"/>
    <property type="evidence" value="ECO:0007669"/>
    <property type="project" value="EnsemblMetazoa"/>
</dbReference>
<dbReference type="GO" id="GO:0048488">
    <property type="term" value="P:synaptic vesicle endocytosis"/>
    <property type="evidence" value="ECO:0000250"/>
    <property type="project" value="UniProtKB"/>
</dbReference>
<dbReference type="InterPro" id="IPR019365">
    <property type="entry name" value="TVP18/Ca-channel_flower"/>
</dbReference>
<dbReference type="PANTHER" id="PTHR13314">
    <property type="entry name" value="CALCIUM CHANNEL FLOWER HOMOLOG"/>
    <property type="match status" value="1"/>
</dbReference>
<dbReference type="PANTHER" id="PTHR13314:SF2">
    <property type="entry name" value="CALCIUM CHANNEL FLOWER HOMOLOG"/>
    <property type="match status" value="1"/>
</dbReference>
<dbReference type="Pfam" id="PF10233">
    <property type="entry name" value="Cg6151-P"/>
    <property type="match status" value="1"/>
</dbReference>
<dbReference type="SMART" id="SM01077">
    <property type="entry name" value="Cg6151-P"/>
    <property type="match status" value="1"/>
</dbReference>
<protein>
    <recommendedName>
        <fullName evidence="1">Calcium channel flower</fullName>
    </recommendedName>
</protein>
<evidence type="ECO:0000250" key="1">
    <source>
        <dbReference type="UniProtKB" id="Q95T12"/>
    </source>
</evidence>
<evidence type="ECO:0000255" key="2"/>
<evidence type="ECO:0000305" key="3"/>
<evidence type="ECO:0000312" key="4">
    <source>
        <dbReference type="EMBL" id="EDV52160.1"/>
    </source>
</evidence>
<name>FLOWR_DROER</name>
<comment type="function">
    <text evidence="1">Transmembrane protein which mediates synaptic endocytosis, fitness-based cell culling, neuronal culling, morphogen gradient scaling, and calcium transport. Regulates synaptic endocytosis and hence couples exo- with endocytosis. Controls two major modes of synaptic vesicle (SV) endocytosis in the synaptic boutons of neuromuscular junctions (NMJs); Ca(2+) channel-independent Clathrin-mediated endocytosis (CME) in response to mild stimulation, and Ca(2+) channel-dependent activity-dependent bulk endocytosis (ADBE) in response to strong stimulation. Functions in ADBE and subsequent SV reformation from bulk endosomes by initiating Ca(2+) channel-dependent phosphatidylinositol 4,5-bisphosphate (PtdIns(4,5)P2) compartmentalization in synaptic boutons. There it acts at the periactive zone to provide the low Ca(2+) levels required to initiate Calcineurin activation and upregulate PtdIns(4,5)P2. Conversely PtdIns(4,5)P2 enhances fwe Ca(2+) channel-activity, establishing a positive feedback loop that induces PtdIns(4,5)P2 microdomain at the periactive zone. These microdomains trigger bulk membrane invagination (i.e. ADBE) by triggering actin polymerization while also promoting localization of fwe to bulk endosomes, thereby removing the ADBE trigger to reduce endocytosis and prevent excess membrane uptake. PtdIns(4,5)P2 then promotes SV reformation from the bulk endosomes, to coordinate ADBE and subsequent SV reformation. Different combinations of the flower isoforms at the cell membrane are also required for the identification and elimination of suboptimal or supernumerary cells during development, regeneration, and adulthood. Required for the recognition and elimination of unfit cells in the developing wing during cell competition. In the developing pupal retina, mediates the elimination of unwanted postmitotic neurons, including supernumerary photoreceptor neurons that form at the periphery of the retina and are contained within incomplete ommatidia units. Also required for efficient elimination and replacement of old neurons by newly generated neurons during regeneration in the adult brain following mechanical injury. Downstream of the flower fitness fingerprints, cells identified as unwanted or unfit are eliminated via apoptosis through the expression of ahuizotl (azot). However, the cells marked for elimination by the flower isoforms only undergo apoptosis if additional thresholds are met; (1) their neighboring fit/healthy cells express different levels of the fwe isoforms, and (2) the levels of the protective signal SPARC expressed by the loser or unwanted cells are unable to inhibit caspase activation. These additional thresholds for flower-mediated apoptosis, allows useful cells to recover from transient and limited stress before they are unnecessarily eliminated. Functions with dally and magu in a mechanism of scaling, which utilises apoptosis to ensure that the dpp morphogen gradient, which mediates organ growth, remains proportional to the size of the growing wing. In this mechanism, fwe represses dally- and Magu-dependent activity in expanding the gradient, and dally/Magu inhibits fwe-dependent apoptosis to keep cell death rate low. When the levels of these different proteins are optimally regulated the gradient correctly scales with organ growth but when this fails, fwe-mediated apoptosis is activated to trim the developing tissue to match the correct size of the gradient.</text>
</comment>
<comment type="activity regulation">
    <text evidence="1">Channel activity is inhibited by La(3+), which reduces Ca(2+) influx and thus inhibits it's function in promoting activity-dependent bulk endocytosis (ADBE) in response to high stimuli.</text>
</comment>
<comment type="subunit">
    <text evidence="1">Homomultimer. Associates with the dally/ magu complex.</text>
</comment>
<comment type="subcellular location">
    <subcellularLocation>
        <location evidence="2">Cell membrane</location>
        <topology evidence="2">Multi-pass membrane protein</topology>
    </subcellularLocation>
    <subcellularLocation>
        <location evidence="1">Cytoplasmic vesicle</location>
        <location evidence="1">Secretory vesicle</location>
        <location evidence="1">Synaptic vesicle membrane</location>
        <topology evidence="1">Multi-pass membrane protein</topology>
    </subcellularLocation>
    <subcellularLocation>
        <location evidence="1">Presynaptic cell membrane</location>
    </subcellularLocation>
    <subcellularLocation>
        <location evidence="1">Endosome</location>
    </subcellularLocation>
    <text evidence="1">Upon fusion of the synaptic vesicle (SV) with the presynaptic membrane, protein transfers from the SV to the periactive zones where endocytosis is known to occur. Upon high K(+) stimulation, expression levels in NMJ boutons are higher in bulk endosomes than in synaptic vesicles, suggesting that it is recycled to bulk endosomes after it activates ADBE.</text>
</comment>
<comment type="similarity">
    <text evidence="3">Belongs to the calcium channel flower family.</text>
</comment>
<proteinExistence type="inferred from homology"/>